<keyword id="KW-1185">Reference proteome</keyword>
<keyword id="KW-0687">Ribonucleoprotein</keyword>
<keyword id="KW-0689">Ribosomal protein</keyword>
<keyword id="KW-0694">RNA-binding</keyword>
<keyword id="KW-0699">rRNA-binding</keyword>
<gene>
    <name evidence="1" type="primary">rplB</name>
    <name type="ordered locus">Atu1943</name>
    <name type="ORF">AGR_C_3550</name>
</gene>
<sequence>MALKSFNPTTPSQRQLVIVDRASLYKGKPVKALTQGLSSKGGRNNQGRITVRFQGGGHKRTYRLVDFKRRKFDVEGTVERLEYDPNRTAFIALVTYTDGEQAYILAPQRLAAGDKVIASDKAVDVKPGNTMPLQYIPVGSIIHNVEMKPGKGGQIARSAGTYVQLVGRDAGMAILRLNSGEQRLVHGSCLASIGAVSNSDHGNINDGKAGRSRWRGKRPHVRGVVMNPVDHPHGGGEGRTSGGRHPVTPWGKPTKGKRTRSNKSTDKFIMRSRHQRKK</sequence>
<reference key="1">
    <citation type="journal article" date="2001" name="Science">
        <title>The genome of the natural genetic engineer Agrobacterium tumefaciens C58.</title>
        <authorList>
            <person name="Wood D.W."/>
            <person name="Setubal J.C."/>
            <person name="Kaul R."/>
            <person name="Monks D.E."/>
            <person name="Kitajima J.P."/>
            <person name="Okura V.K."/>
            <person name="Zhou Y."/>
            <person name="Chen L."/>
            <person name="Wood G.E."/>
            <person name="Almeida N.F. Jr."/>
            <person name="Woo L."/>
            <person name="Chen Y."/>
            <person name="Paulsen I.T."/>
            <person name="Eisen J.A."/>
            <person name="Karp P.D."/>
            <person name="Bovee D. Sr."/>
            <person name="Chapman P."/>
            <person name="Clendenning J."/>
            <person name="Deatherage G."/>
            <person name="Gillet W."/>
            <person name="Grant C."/>
            <person name="Kutyavin T."/>
            <person name="Levy R."/>
            <person name="Li M.-J."/>
            <person name="McClelland E."/>
            <person name="Palmieri A."/>
            <person name="Raymond C."/>
            <person name="Rouse G."/>
            <person name="Saenphimmachak C."/>
            <person name="Wu Z."/>
            <person name="Romero P."/>
            <person name="Gordon D."/>
            <person name="Zhang S."/>
            <person name="Yoo H."/>
            <person name="Tao Y."/>
            <person name="Biddle P."/>
            <person name="Jung M."/>
            <person name="Krespan W."/>
            <person name="Perry M."/>
            <person name="Gordon-Kamm B."/>
            <person name="Liao L."/>
            <person name="Kim S."/>
            <person name="Hendrick C."/>
            <person name="Zhao Z.-Y."/>
            <person name="Dolan M."/>
            <person name="Chumley F."/>
            <person name="Tingey S.V."/>
            <person name="Tomb J.-F."/>
            <person name="Gordon M.P."/>
            <person name="Olson M.V."/>
            <person name="Nester E.W."/>
        </authorList>
    </citation>
    <scope>NUCLEOTIDE SEQUENCE [LARGE SCALE GENOMIC DNA]</scope>
    <source>
        <strain>C58 / ATCC 33970</strain>
    </source>
</reference>
<reference key="2">
    <citation type="journal article" date="2001" name="Science">
        <title>Genome sequence of the plant pathogen and biotechnology agent Agrobacterium tumefaciens C58.</title>
        <authorList>
            <person name="Goodner B."/>
            <person name="Hinkle G."/>
            <person name="Gattung S."/>
            <person name="Miller N."/>
            <person name="Blanchard M."/>
            <person name="Qurollo B."/>
            <person name="Goldman B.S."/>
            <person name="Cao Y."/>
            <person name="Askenazi M."/>
            <person name="Halling C."/>
            <person name="Mullin L."/>
            <person name="Houmiel K."/>
            <person name="Gordon J."/>
            <person name="Vaudin M."/>
            <person name="Iartchouk O."/>
            <person name="Epp A."/>
            <person name="Liu F."/>
            <person name="Wollam C."/>
            <person name="Allinger M."/>
            <person name="Doughty D."/>
            <person name="Scott C."/>
            <person name="Lappas C."/>
            <person name="Markelz B."/>
            <person name="Flanagan C."/>
            <person name="Crowell C."/>
            <person name="Gurson J."/>
            <person name="Lomo C."/>
            <person name="Sear C."/>
            <person name="Strub G."/>
            <person name="Cielo C."/>
            <person name="Slater S."/>
        </authorList>
    </citation>
    <scope>NUCLEOTIDE SEQUENCE [LARGE SCALE GENOMIC DNA]</scope>
    <source>
        <strain>C58 / ATCC 33970</strain>
    </source>
</reference>
<dbReference type="EMBL" id="AE007869">
    <property type="protein sequence ID" value="AAK87705.1"/>
    <property type="molecule type" value="Genomic_DNA"/>
</dbReference>
<dbReference type="PIR" id="AE2815">
    <property type="entry name" value="AE2815"/>
</dbReference>
<dbReference type="PIR" id="H97593">
    <property type="entry name" value="H97593"/>
</dbReference>
<dbReference type="RefSeq" id="NP_354920.1">
    <property type="nucleotide sequence ID" value="NC_003062.2"/>
</dbReference>
<dbReference type="RefSeq" id="WP_003507771.1">
    <property type="nucleotide sequence ID" value="NC_003062.2"/>
</dbReference>
<dbReference type="SMR" id="Q8UE21"/>
<dbReference type="STRING" id="176299.Atu1943"/>
<dbReference type="EnsemblBacteria" id="AAK87705">
    <property type="protein sequence ID" value="AAK87705"/>
    <property type="gene ID" value="Atu1943"/>
</dbReference>
<dbReference type="GeneID" id="97364690"/>
<dbReference type="KEGG" id="atu:Atu1943"/>
<dbReference type="PATRIC" id="fig|176299.10.peg.1955"/>
<dbReference type="eggNOG" id="COG0090">
    <property type="taxonomic scope" value="Bacteria"/>
</dbReference>
<dbReference type="HOGENOM" id="CLU_036235_2_1_5"/>
<dbReference type="OrthoDB" id="9778722at2"/>
<dbReference type="PhylomeDB" id="Q8UE21"/>
<dbReference type="BioCyc" id="AGRO:ATU1943-MONOMER"/>
<dbReference type="Proteomes" id="UP000000813">
    <property type="component" value="Chromosome circular"/>
</dbReference>
<dbReference type="GO" id="GO:0015934">
    <property type="term" value="C:large ribosomal subunit"/>
    <property type="evidence" value="ECO:0007669"/>
    <property type="project" value="InterPro"/>
</dbReference>
<dbReference type="GO" id="GO:0019843">
    <property type="term" value="F:rRNA binding"/>
    <property type="evidence" value="ECO:0007669"/>
    <property type="project" value="UniProtKB-UniRule"/>
</dbReference>
<dbReference type="GO" id="GO:0003735">
    <property type="term" value="F:structural constituent of ribosome"/>
    <property type="evidence" value="ECO:0007669"/>
    <property type="project" value="InterPro"/>
</dbReference>
<dbReference type="GO" id="GO:0016740">
    <property type="term" value="F:transferase activity"/>
    <property type="evidence" value="ECO:0007669"/>
    <property type="project" value="InterPro"/>
</dbReference>
<dbReference type="GO" id="GO:0002181">
    <property type="term" value="P:cytoplasmic translation"/>
    <property type="evidence" value="ECO:0007669"/>
    <property type="project" value="TreeGrafter"/>
</dbReference>
<dbReference type="FunFam" id="2.30.30.30:FF:000001">
    <property type="entry name" value="50S ribosomal protein L2"/>
    <property type="match status" value="1"/>
</dbReference>
<dbReference type="FunFam" id="2.40.50.140:FF:000003">
    <property type="entry name" value="50S ribosomal protein L2"/>
    <property type="match status" value="1"/>
</dbReference>
<dbReference type="FunFam" id="4.10.950.10:FF:000001">
    <property type="entry name" value="50S ribosomal protein L2"/>
    <property type="match status" value="1"/>
</dbReference>
<dbReference type="Gene3D" id="2.30.30.30">
    <property type="match status" value="1"/>
</dbReference>
<dbReference type="Gene3D" id="2.40.50.140">
    <property type="entry name" value="Nucleic acid-binding proteins"/>
    <property type="match status" value="1"/>
</dbReference>
<dbReference type="Gene3D" id="4.10.950.10">
    <property type="entry name" value="Ribosomal protein L2, domain 3"/>
    <property type="match status" value="1"/>
</dbReference>
<dbReference type="HAMAP" id="MF_01320_B">
    <property type="entry name" value="Ribosomal_uL2_B"/>
    <property type="match status" value="1"/>
</dbReference>
<dbReference type="InterPro" id="IPR012340">
    <property type="entry name" value="NA-bd_OB-fold"/>
</dbReference>
<dbReference type="InterPro" id="IPR014722">
    <property type="entry name" value="Rib_uL2_dom2"/>
</dbReference>
<dbReference type="InterPro" id="IPR002171">
    <property type="entry name" value="Ribosomal_uL2"/>
</dbReference>
<dbReference type="InterPro" id="IPR005880">
    <property type="entry name" value="Ribosomal_uL2_bac/org-type"/>
</dbReference>
<dbReference type="InterPro" id="IPR022669">
    <property type="entry name" value="Ribosomal_uL2_C"/>
</dbReference>
<dbReference type="InterPro" id="IPR022671">
    <property type="entry name" value="Ribosomal_uL2_CS"/>
</dbReference>
<dbReference type="InterPro" id="IPR014726">
    <property type="entry name" value="Ribosomal_uL2_dom3"/>
</dbReference>
<dbReference type="InterPro" id="IPR022666">
    <property type="entry name" value="Ribosomal_uL2_RNA-bd_dom"/>
</dbReference>
<dbReference type="InterPro" id="IPR008991">
    <property type="entry name" value="Translation_prot_SH3-like_sf"/>
</dbReference>
<dbReference type="NCBIfam" id="TIGR01171">
    <property type="entry name" value="rplB_bact"/>
    <property type="match status" value="1"/>
</dbReference>
<dbReference type="PANTHER" id="PTHR13691:SF5">
    <property type="entry name" value="LARGE RIBOSOMAL SUBUNIT PROTEIN UL2M"/>
    <property type="match status" value="1"/>
</dbReference>
<dbReference type="PANTHER" id="PTHR13691">
    <property type="entry name" value="RIBOSOMAL PROTEIN L2"/>
    <property type="match status" value="1"/>
</dbReference>
<dbReference type="Pfam" id="PF00181">
    <property type="entry name" value="Ribosomal_L2"/>
    <property type="match status" value="1"/>
</dbReference>
<dbReference type="Pfam" id="PF03947">
    <property type="entry name" value="Ribosomal_L2_C"/>
    <property type="match status" value="1"/>
</dbReference>
<dbReference type="PIRSF" id="PIRSF002158">
    <property type="entry name" value="Ribosomal_L2"/>
    <property type="match status" value="1"/>
</dbReference>
<dbReference type="SMART" id="SM01383">
    <property type="entry name" value="Ribosomal_L2"/>
    <property type="match status" value="1"/>
</dbReference>
<dbReference type="SMART" id="SM01382">
    <property type="entry name" value="Ribosomal_L2_C"/>
    <property type="match status" value="1"/>
</dbReference>
<dbReference type="SUPFAM" id="SSF50249">
    <property type="entry name" value="Nucleic acid-binding proteins"/>
    <property type="match status" value="1"/>
</dbReference>
<dbReference type="SUPFAM" id="SSF50104">
    <property type="entry name" value="Translation proteins SH3-like domain"/>
    <property type="match status" value="1"/>
</dbReference>
<dbReference type="PROSITE" id="PS00467">
    <property type="entry name" value="RIBOSOMAL_L2"/>
    <property type="match status" value="1"/>
</dbReference>
<organism>
    <name type="scientific">Agrobacterium fabrum (strain C58 / ATCC 33970)</name>
    <name type="common">Agrobacterium tumefaciens (strain C58)</name>
    <dbReference type="NCBI Taxonomy" id="176299"/>
    <lineage>
        <taxon>Bacteria</taxon>
        <taxon>Pseudomonadati</taxon>
        <taxon>Pseudomonadota</taxon>
        <taxon>Alphaproteobacteria</taxon>
        <taxon>Hyphomicrobiales</taxon>
        <taxon>Rhizobiaceae</taxon>
        <taxon>Rhizobium/Agrobacterium group</taxon>
        <taxon>Agrobacterium</taxon>
        <taxon>Agrobacterium tumefaciens complex</taxon>
    </lineage>
</organism>
<comment type="function">
    <text evidence="1">One of the primary rRNA binding proteins. Required for association of the 30S and 50S subunits to form the 70S ribosome, for tRNA binding and peptide bond formation. It has been suggested to have peptidyltransferase activity; this is somewhat controversial. Makes several contacts with the 16S rRNA in the 70S ribosome.</text>
</comment>
<comment type="subunit">
    <text evidence="1">Part of the 50S ribosomal subunit. Forms a bridge to the 30S subunit in the 70S ribosome.</text>
</comment>
<comment type="similarity">
    <text evidence="1">Belongs to the universal ribosomal protein uL2 family.</text>
</comment>
<evidence type="ECO:0000255" key="1">
    <source>
        <dbReference type="HAMAP-Rule" id="MF_01320"/>
    </source>
</evidence>
<evidence type="ECO:0000256" key="2">
    <source>
        <dbReference type="SAM" id="MobiDB-lite"/>
    </source>
</evidence>
<evidence type="ECO:0000305" key="3"/>
<feature type="chain" id="PRO_0000129520" description="Large ribosomal subunit protein uL2">
    <location>
        <begin position="1"/>
        <end position="278"/>
    </location>
</feature>
<feature type="region of interest" description="Disordered" evidence="2">
    <location>
        <begin position="201"/>
        <end position="278"/>
    </location>
</feature>
<feature type="compositionally biased region" description="Basic residues" evidence="2">
    <location>
        <begin position="210"/>
        <end position="221"/>
    </location>
</feature>
<name>RL2_AGRFC</name>
<accession>Q8UE21</accession>
<proteinExistence type="inferred from homology"/>
<protein>
    <recommendedName>
        <fullName evidence="1">Large ribosomal subunit protein uL2</fullName>
    </recommendedName>
    <alternativeName>
        <fullName evidence="3">50S ribosomal protein L2</fullName>
    </alternativeName>
</protein>